<organismHost>
    <name type="scientific">Acidianus convivator</name>
    <dbReference type="NCBI Taxonomy" id="269667"/>
</organismHost>
<keyword id="KW-1185">Reference proteome</keyword>
<proteinExistence type="predicted"/>
<protein>
    <recommendedName>
        <fullName>Uncharacterized protein ORF60</fullName>
    </recommendedName>
</protein>
<reference key="1">
    <citation type="journal article" date="2005" name="Nature">
        <title>Virology: independent virus development outside a host.</title>
        <authorList>
            <person name="Haring M."/>
            <person name="Vestergaard G."/>
            <person name="Rachel R."/>
            <person name="Chen L."/>
            <person name="Garrett R.A."/>
            <person name="Prangishvili D."/>
        </authorList>
    </citation>
    <scope>NUCLEOTIDE SEQUENCE [GENOMIC DNA]</scope>
</reference>
<feature type="chain" id="PRO_0000389061" description="Uncharacterized protein ORF60">
    <location>
        <begin position="1"/>
        <end position="60"/>
    </location>
</feature>
<accession>Q3V4V7</accession>
<name>Y060_ATV</name>
<organism>
    <name type="scientific">Acidianus two-tailed virus</name>
    <name type="common">ATV</name>
    <dbReference type="NCBI Taxonomy" id="315953"/>
    <lineage>
        <taxon>Viruses</taxon>
        <taxon>Viruses incertae sedis</taxon>
        <taxon>Bicaudaviridae</taxon>
        <taxon>Bicaudavirus</taxon>
    </lineage>
</organism>
<dbReference type="EMBL" id="AJ888457">
    <property type="protein sequence ID" value="CAI59857.1"/>
    <property type="molecule type" value="Genomic_DNA"/>
</dbReference>
<dbReference type="RefSeq" id="YP_319860.1">
    <property type="nucleotide sequence ID" value="NC_007409.1"/>
</dbReference>
<dbReference type="SMR" id="Q3V4V7"/>
<dbReference type="GeneID" id="4484232"/>
<dbReference type="KEGG" id="vg:4484232"/>
<dbReference type="OrthoDB" id="26434at10239"/>
<dbReference type="Proteomes" id="UP000002150">
    <property type="component" value="Genome"/>
</dbReference>
<dbReference type="GO" id="GO:0006355">
    <property type="term" value="P:regulation of DNA-templated transcription"/>
    <property type="evidence" value="ECO:0007669"/>
    <property type="project" value="InterPro"/>
</dbReference>
<dbReference type="Gene3D" id="1.10.1220.10">
    <property type="entry name" value="Met repressor-like"/>
    <property type="match status" value="1"/>
</dbReference>
<dbReference type="InterPro" id="IPR013321">
    <property type="entry name" value="Arc_rbn_hlx_hlx"/>
</dbReference>
<dbReference type="InterPro" id="IPR010985">
    <property type="entry name" value="Ribbon_hlx_hlx"/>
</dbReference>
<dbReference type="SUPFAM" id="SSF47598">
    <property type="entry name" value="Ribbon-helix-helix"/>
    <property type="match status" value="1"/>
</dbReference>
<sequence length="60" mass="6986">MMKEVSFKAEEDLLVLLDRYAMKYKLNRSEAIRKAIEKMLRDELAKEPTPVARVENSSLS</sequence>